<protein>
    <recommendedName>
        <fullName>Myoglobin</fullName>
    </recommendedName>
    <alternativeName>
        <fullName evidence="1">Nitrite reductase MB</fullName>
        <ecNumber evidence="1">1.7.-.-</ecNumber>
    </alternativeName>
    <alternativeName>
        <fullName evidence="1">Pseudoperoxidase MB</fullName>
        <ecNumber evidence="1">1.11.1.-</ecNumber>
    </alternativeName>
</protein>
<feature type="initiator methionine" description="Removed" evidence="8">
    <location>
        <position position="1"/>
    </location>
</feature>
<feature type="chain" id="PRO_0000053322" description="Myoglobin">
    <location>
        <begin position="2"/>
        <end position="154"/>
    </location>
</feature>
<feature type="domain" description="Globin" evidence="7">
    <location>
        <begin position="2"/>
        <end position="148"/>
    </location>
</feature>
<feature type="binding site" evidence="5">
    <location>
        <position position="65"/>
    </location>
    <ligand>
        <name>nitrite</name>
        <dbReference type="ChEBI" id="CHEBI:16301"/>
    </ligand>
</feature>
<feature type="binding site" evidence="3 7">
    <location>
        <position position="65"/>
    </location>
    <ligand>
        <name>O2</name>
        <dbReference type="ChEBI" id="CHEBI:15379"/>
    </ligand>
</feature>
<feature type="binding site" description="proximal binding residue" evidence="1">
    <location>
        <position position="94"/>
    </location>
    <ligand>
        <name>heme b</name>
        <dbReference type="ChEBI" id="CHEBI:60344"/>
    </ligand>
    <ligandPart>
        <name>Fe</name>
        <dbReference type="ChEBI" id="CHEBI:18248"/>
    </ligandPart>
</feature>
<feature type="modified residue" description="Phosphoserine" evidence="6">
    <location>
        <position position="4"/>
    </location>
</feature>
<feature type="modified residue" description="Phosphothreonine" evidence="4">
    <location>
        <position position="68"/>
    </location>
</feature>
<reference key="1">
    <citation type="journal article" date="1982" name="Proc. Natl. Acad. Sci. U.S.A.">
        <title>Ochotona princeps (pika) myoglobin: an appraisal of lagomorph phylogeny.</title>
        <authorList>
            <person name="Dene H."/>
            <person name="Goodman M."/>
            <person name="McKenna M.C."/>
            <person name="Romero-Herrera A.E."/>
        </authorList>
    </citation>
    <scope>PROTEIN SEQUENCE OF 2-154</scope>
</reference>
<gene>
    <name type="primary">MB</name>
</gene>
<proteinExistence type="evidence at protein level"/>
<organism>
    <name type="scientific">Ochotona princeps</name>
    <name type="common">Southern American pika</name>
    <dbReference type="NCBI Taxonomy" id="9978"/>
    <lineage>
        <taxon>Eukaryota</taxon>
        <taxon>Metazoa</taxon>
        <taxon>Chordata</taxon>
        <taxon>Craniata</taxon>
        <taxon>Vertebrata</taxon>
        <taxon>Euteleostomi</taxon>
        <taxon>Mammalia</taxon>
        <taxon>Eutheria</taxon>
        <taxon>Euarchontoglires</taxon>
        <taxon>Glires</taxon>
        <taxon>Lagomorpha</taxon>
        <taxon>Ochotonidae</taxon>
        <taxon>Ochotona</taxon>
    </lineage>
</organism>
<name>MYG_OCHPR</name>
<evidence type="ECO:0000250" key="1">
    <source>
        <dbReference type="UniProtKB" id="P02144"/>
    </source>
</evidence>
<evidence type="ECO:0000250" key="2">
    <source>
        <dbReference type="UniProtKB" id="P02185"/>
    </source>
</evidence>
<evidence type="ECO:0000250" key="3">
    <source>
        <dbReference type="UniProtKB" id="P02189"/>
    </source>
</evidence>
<evidence type="ECO:0000250" key="4">
    <source>
        <dbReference type="UniProtKB" id="P04247"/>
    </source>
</evidence>
<evidence type="ECO:0000250" key="5">
    <source>
        <dbReference type="UniProtKB" id="P68082"/>
    </source>
</evidence>
<evidence type="ECO:0000250" key="6">
    <source>
        <dbReference type="UniProtKB" id="Q9QZ76"/>
    </source>
</evidence>
<evidence type="ECO:0000255" key="7">
    <source>
        <dbReference type="PROSITE-ProRule" id="PRU00238"/>
    </source>
</evidence>
<evidence type="ECO:0000269" key="8">
    <source>
    </source>
</evidence>
<dbReference type="EC" id="1.7.-.-" evidence="1"/>
<dbReference type="EC" id="1.11.1.-" evidence="1"/>
<dbReference type="PIR" id="A02493">
    <property type="entry name" value="MYOI"/>
</dbReference>
<dbReference type="RefSeq" id="XP_004589610.2">
    <property type="nucleotide sequence ID" value="XM_004589553.3"/>
</dbReference>
<dbReference type="SMR" id="P02171"/>
<dbReference type="GeneID" id="101536764"/>
<dbReference type="OrthoDB" id="6344802at2759"/>
<dbReference type="GO" id="GO:0070062">
    <property type="term" value="C:extracellular exosome"/>
    <property type="evidence" value="ECO:0007669"/>
    <property type="project" value="TreeGrafter"/>
</dbReference>
<dbReference type="GO" id="GO:0016528">
    <property type="term" value="C:sarcoplasm"/>
    <property type="evidence" value="ECO:0000250"/>
    <property type="project" value="UniProtKB"/>
</dbReference>
<dbReference type="GO" id="GO:0020037">
    <property type="term" value="F:heme binding"/>
    <property type="evidence" value="ECO:0007669"/>
    <property type="project" value="InterPro"/>
</dbReference>
<dbReference type="GO" id="GO:0046872">
    <property type="term" value="F:metal ion binding"/>
    <property type="evidence" value="ECO:0007669"/>
    <property type="project" value="UniProtKB-KW"/>
</dbReference>
<dbReference type="GO" id="GO:0098809">
    <property type="term" value="F:nitrite reductase activity"/>
    <property type="evidence" value="ECO:0000250"/>
    <property type="project" value="UniProtKB"/>
</dbReference>
<dbReference type="GO" id="GO:0019825">
    <property type="term" value="F:oxygen binding"/>
    <property type="evidence" value="ECO:0007669"/>
    <property type="project" value="InterPro"/>
</dbReference>
<dbReference type="GO" id="GO:0005344">
    <property type="term" value="F:oxygen carrier activity"/>
    <property type="evidence" value="ECO:0000250"/>
    <property type="project" value="UniProtKB"/>
</dbReference>
<dbReference type="GO" id="GO:0004601">
    <property type="term" value="F:peroxidase activity"/>
    <property type="evidence" value="ECO:0000250"/>
    <property type="project" value="UniProtKB"/>
</dbReference>
<dbReference type="GO" id="GO:0019430">
    <property type="term" value="P:removal of superoxide radicals"/>
    <property type="evidence" value="ECO:0000250"/>
    <property type="project" value="UniProtKB"/>
</dbReference>
<dbReference type="CDD" id="cd08926">
    <property type="entry name" value="Mb"/>
    <property type="match status" value="1"/>
</dbReference>
<dbReference type="Gene3D" id="6.10.140.2100">
    <property type="match status" value="1"/>
</dbReference>
<dbReference type="Gene3D" id="6.10.140.2110">
    <property type="match status" value="1"/>
</dbReference>
<dbReference type="InterPro" id="IPR000971">
    <property type="entry name" value="Globin"/>
</dbReference>
<dbReference type="InterPro" id="IPR009050">
    <property type="entry name" value="Globin-like_sf"/>
</dbReference>
<dbReference type="InterPro" id="IPR002335">
    <property type="entry name" value="Myoglobin"/>
</dbReference>
<dbReference type="PANTHER" id="PTHR47132">
    <property type="entry name" value="MYOGLOBIN"/>
    <property type="match status" value="1"/>
</dbReference>
<dbReference type="PANTHER" id="PTHR47132:SF1">
    <property type="entry name" value="MYOGLOBIN"/>
    <property type="match status" value="1"/>
</dbReference>
<dbReference type="Pfam" id="PF00042">
    <property type="entry name" value="Globin"/>
    <property type="match status" value="1"/>
</dbReference>
<dbReference type="PRINTS" id="PR00613">
    <property type="entry name" value="MYOGLOBIN"/>
</dbReference>
<dbReference type="SUPFAM" id="SSF46458">
    <property type="entry name" value="Globin-like"/>
    <property type="match status" value="1"/>
</dbReference>
<dbReference type="PROSITE" id="PS01033">
    <property type="entry name" value="GLOBIN"/>
    <property type="match status" value="1"/>
</dbReference>
<keyword id="KW-0963">Cytoplasm</keyword>
<keyword id="KW-0903">Direct protein sequencing</keyword>
<keyword id="KW-0349">Heme</keyword>
<keyword id="KW-0408">Iron</keyword>
<keyword id="KW-0479">Metal-binding</keyword>
<keyword id="KW-0514">Muscle protein</keyword>
<keyword id="KW-0560">Oxidoreductase</keyword>
<keyword id="KW-0561">Oxygen transport</keyword>
<keyword id="KW-0597">Phosphoprotein</keyword>
<keyword id="KW-0813">Transport</keyword>
<accession>P02171</accession>
<sequence length="154" mass="17109">MGLSDGEWQLVLNVWGKVEADLAGHGQEVLIRLFKNHPETLEKFDKFKNLKSEDEMKGSDDLKKHGNTVLSALGGILKKKGQHEAELKPLAQSHATKHKIPVKYLEFISEAIIQVLQSKHPGDFGADAQGAMSKALELFRNDMAAKYKELGFQG</sequence>
<comment type="function">
    <text evidence="1">Monomeric heme protein which primary function is to store oxygen and facilitate its diffusion within muscle tissues. Reversibly binds oxygen through a pentacoordinated heme iron and enables its timely and efficient release as needed during periods of heightened demand. Depending on the oxidative conditions of tissues and cells, and in addition to its ability to bind oxygen, it also has a nitrite reductase activity whereby it regulates the production of bioactive nitric oxide. Under stress conditions, like hypoxia and anoxia, it also protects cells against reactive oxygen species thanks to its pseudoperoxidase activity.</text>
</comment>
<comment type="catalytic activity">
    <reaction evidence="1">
        <text>Fe(III)-heme b-[protein] + nitric oxide + H2O = Fe(II)-heme b-[protein] + nitrite + 2 H(+)</text>
        <dbReference type="Rhea" id="RHEA:77711"/>
        <dbReference type="Rhea" id="RHEA-COMP:18975"/>
        <dbReference type="Rhea" id="RHEA-COMP:18976"/>
        <dbReference type="ChEBI" id="CHEBI:15377"/>
        <dbReference type="ChEBI" id="CHEBI:15378"/>
        <dbReference type="ChEBI" id="CHEBI:16301"/>
        <dbReference type="ChEBI" id="CHEBI:16480"/>
        <dbReference type="ChEBI" id="CHEBI:55376"/>
        <dbReference type="ChEBI" id="CHEBI:60344"/>
    </reaction>
    <physiologicalReaction direction="right-to-left" evidence="1">
        <dbReference type="Rhea" id="RHEA:77713"/>
    </physiologicalReaction>
</comment>
<comment type="catalytic activity">
    <reaction evidence="1">
        <text>H2O2 + AH2 = A + 2 H2O</text>
        <dbReference type="Rhea" id="RHEA:30275"/>
        <dbReference type="ChEBI" id="CHEBI:13193"/>
        <dbReference type="ChEBI" id="CHEBI:15377"/>
        <dbReference type="ChEBI" id="CHEBI:16240"/>
        <dbReference type="ChEBI" id="CHEBI:17499"/>
    </reaction>
</comment>
<comment type="subunit">
    <text evidence="2">Monomeric.</text>
</comment>
<comment type="subcellular location">
    <subcellularLocation>
        <location evidence="1">Cytoplasm</location>
        <location evidence="1">Sarcoplasm</location>
    </subcellularLocation>
</comment>
<comment type="similarity">
    <text evidence="7">Belongs to the globin family.</text>
</comment>